<reference key="1">
    <citation type="journal article" date="2001" name="Lancet">
        <title>Whole genome sequencing of meticillin-resistant Staphylococcus aureus.</title>
        <authorList>
            <person name="Kuroda M."/>
            <person name="Ohta T."/>
            <person name="Uchiyama I."/>
            <person name="Baba T."/>
            <person name="Yuzawa H."/>
            <person name="Kobayashi I."/>
            <person name="Cui L."/>
            <person name="Oguchi A."/>
            <person name="Aoki K."/>
            <person name="Nagai Y."/>
            <person name="Lian J.-Q."/>
            <person name="Ito T."/>
            <person name="Kanamori M."/>
            <person name="Matsumaru H."/>
            <person name="Maruyama A."/>
            <person name="Murakami H."/>
            <person name="Hosoyama A."/>
            <person name="Mizutani-Ui Y."/>
            <person name="Takahashi N.K."/>
            <person name="Sawano T."/>
            <person name="Inoue R."/>
            <person name="Kaito C."/>
            <person name="Sekimizu K."/>
            <person name="Hirakawa H."/>
            <person name="Kuhara S."/>
            <person name="Goto S."/>
            <person name="Yabuzaki J."/>
            <person name="Kanehisa M."/>
            <person name="Yamashita A."/>
            <person name="Oshima K."/>
            <person name="Furuya K."/>
            <person name="Yoshino C."/>
            <person name="Shiba T."/>
            <person name="Hattori M."/>
            <person name="Ogasawara N."/>
            <person name="Hayashi H."/>
            <person name="Hiramatsu K."/>
        </authorList>
    </citation>
    <scope>NUCLEOTIDE SEQUENCE [LARGE SCALE GENOMIC DNA]</scope>
    <source>
        <strain>Mu50 / ATCC 700699</strain>
    </source>
</reference>
<protein>
    <recommendedName>
        <fullName evidence="1">Probable manganese-dependent inorganic pyrophosphatase</fullName>
        <ecNumber evidence="1">3.6.1.1</ecNumber>
    </recommendedName>
    <alternativeName>
        <fullName evidence="1">Pyrophosphate phospho-hydrolase</fullName>
        <shortName evidence="1">PPase</shortName>
    </alternativeName>
</protein>
<sequence>MAKTYIFGHKNPDTDAISSAIIMAEFEQLRGNSGAKAYRLGDVSAETQFALDTFNVPAPELLTDDLDGQDVILVDHNEFQQSSDTIASATIKHVIDHHRIANFETAGPLCYRAEPVGCTATILYKMFRERGFEIKPEIAGLMLSAIISDSLLFKSPTCTQQDVKAAEELKDIAKVDIQKYGLDMLKAGASTTDKSVEFLLNMDAKSFTMGDYVTRIAQVNAVDLDEVLNRKEDLEKEMLAVSAQEKYDLFVLVVTDIINSDSKILVVGAEKDKVGEAFNVQLEDDMAFLSGVVSRKKQIVPQITEALTK</sequence>
<keyword id="KW-0002">3D-structure</keyword>
<keyword id="KW-0963">Cytoplasm</keyword>
<keyword id="KW-0378">Hydrolase</keyword>
<keyword id="KW-0464">Manganese</keyword>
<keyword id="KW-0479">Metal-binding</keyword>
<gene>
    <name evidence="1" type="primary">ppaC</name>
    <name type="ordered locus">SAV1919</name>
</gene>
<feature type="chain" id="PRO_0000158580" description="Probable manganese-dependent inorganic pyrophosphatase">
    <location>
        <begin position="1"/>
        <end position="309"/>
    </location>
</feature>
<feature type="binding site" evidence="1">
    <location>
        <position position="9"/>
    </location>
    <ligand>
        <name>Mn(2+)</name>
        <dbReference type="ChEBI" id="CHEBI:29035"/>
        <label>1</label>
    </ligand>
</feature>
<feature type="binding site" evidence="1">
    <location>
        <position position="13"/>
    </location>
    <ligand>
        <name>Mn(2+)</name>
        <dbReference type="ChEBI" id="CHEBI:29035"/>
        <label>1</label>
    </ligand>
</feature>
<feature type="binding site" evidence="1">
    <location>
        <position position="15"/>
    </location>
    <ligand>
        <name>Mn(2+)</name>
        <dbReference type="ChEBI" id="CHEBI:29035"/>
        <label>2</label>
    </ligand>
</feature>
<feature type="binding site" evidence="1">
    <location>
        <position position="75"/>
    </location>
    <ligand>
        <name>Mn(2+)</name>
        <dbReference type="ChEBI" id="CHEBI:29035"/>
        <label>1</label>
    </ligand>
</feature>
<feature type="binding site" evidence="1">
    <location>
        <position position="75"/>
    </location>
    <ligand>
        <name>Mn(2+)</name>
        <dbReference type="ChEBI" id="CHEBI:29035"/>
        <label>2</label>
    </ligand>
</feature>
<feature type="binding site" evidence="1">
    <location>
        <position position="97"/>
    </location>
    <ligand>
        <name>Mn(2+)</name>
        <dbReference type="ChEBI" id="CHEBI:29035"/>
        <label>2</label>
    </ligand>
</feature>
<feature type="binding site" evidence="1">
    <location>
        <position position="149"/>
    </location>
    <ligand>
        <name>Mn(2+)</name>
        <dbReference type="ChEBI" id="CHEBI:29035"/>
        <label>2</label>
    </ligand>
</feature>
<feature type="strand" evidence="2">
    <location>
        <begin position="4"/>
        <end position="7"/>
    </location>
</feature>
<feature type="helix" evidence="2">
    <location>
        <begin position="14"/>
        <end position="29"/>
    </location>
</feature>
<feature type="strand" evidence="2">
    <location>
        <begin position="35"/>
        <end position="41"/>
    </location>
</feature>
<feature type="helix" evidence="2">
    <location>
        <begin position="45"/>
        <end position="53"/>
    </location>
</feature>
<feature type="strand" evidence="2">
    <location>
        <begin position="70"/>
        <end position="75"/>
    </location>
</feature>
<feature type="helix" evidence="2">
    <location>
        <begin position="79"/>
        <end position="81"/>
    </location>
</feature>
<feature type="helix" evidence="2">
    <location>
        <begin position="86"/>
        <end position="88"/>
    </location>
</feature>
<feature type="strand" evidence="2">
    <location>
        <begin position="89"/>
        <end position="96"/>
    </location>
</feature>
<feature type="strand" evidence="2">
    <location>
        <begin position="110"/>
        <end position="113"/>
    </location>
</feature>
<feature type="strand" evidence="2">
    <location>
        <begin position="115"/>
        <end position="117"/>
    </location>
</feature>
<feature type="helix" evidence="2">
    <location>
        <begin position="119"/>
        <end position="130"/>
    </location>
</feature>
<feature type="helix" evidence="2">
    <location>
        <begin position="136"/>
        <end position="150"/>
    </location>
</feature>
<feature type="turn" evidence="2">
    <location>
        <begin position="151"/>
        <end position="154"/>
    </location>
</feature>
<feature type="helix" evidence="2">
    <location>
        <begin position="160"/>
        <end position="173"/>
    </location>
</feature>
<feature type="helix" evidence="2">
    <location>
        <begin position="177"/>
        <end position="187"/>
    </location>
</feature>
<feature type="helix" evidence="2">
    <location>
        <begin position="196"/>
        <end position="201"/>
    </location>
</feature>
<feature type="strand" evidence="2">
    <location>
        <begin position="204"/>
        <end position="209"/>
    </location>
</feature>
<feature type="strand" evidence="2">
    <location>
        <begin position="212"/>
        <end position="223"/>
    </location>
</feature>
<feature type="helix" evidence="2">
    <location>
        <begin position="224"/>
        <end position="228"/>
    </location>
</feature>
<feature type="helix" evidence="2">
    <location>
        <begin position="231"/>
        <end position="245"/>
    </location>
</feature>
<feature type="strand" evidence="2">
    <location>
        <begin position="248"/>
        <end position="256"/>
    </location>
</feature>
<feature type="turn" evidence="2">
    <location>
        <begin position="257"/>
        <end position="259"/>
    </location>
</feature>
<feature type="strand" evidence="2">
    <location>
        <begin position="262"/>
        <end position="268"/>
    </location>
</feature>
<feature type="helix" evidence="2">
    <location>
        <begin position="271"/>
        <end position="275"/>
    </location>
</feature>
<feature type="strand" evidence="2">
    <location>
        <begin position="280"/>
        <end position="283"/>
    </location>
</feature>
<feature type="strand" evidence="2">
    <location>
        <begin position="285"/>
        <end position="292"/>
    </location>
</feature>
<feature type="strand" evidence="2">
    <location>
        <begin position="295"/>
        <end position="297"/>
    </location>
</feature>
<feature type="helix" evidence="2">
    <location>
        <begin position="299"/>
        <end position="308"/>
    </location>
</feature>
<evidence type="ECO:0000255" key="1">
    <source>
        <dbReference type="HAMAP-Rule" id="MF_00207"/>
    </source>
</evidence>
<evidence type="ECO:0007829" key="2">
    <source>
        <dbReference type="PDB" id="4RPA"/>
    </source>
</evidence>
<comment type="catalytic activity">
    <reaction evidence="1">
        <text>diphosphate + H2O = 2 phosphate + H(+)</text>
        <dbReference type="Rhea" id="RHEA:24576"/>
        <dbReference type="ChEBI" id="CHEBI:15377"/>
        <dbReference type="ChEBI" id="CHEBI:15378"/>
        <dbReference type="ChEBI" id="CHEBI:33019"/>
        <dbReference type="ChEBI" id="CHEBI:43474"/>
        <dbReference type="EC" id="3.6.1.1"/>
    </reaction>
</comment>
<comment type="cofactor">
    <cofactor evidence="1">
        <name>Mn(2+)</name>
        <dbReference type="ChEBI" id="CHEBI:29035"/>
    </cofactor>
    <text evidence="1">Binds 2 manganese ions per subunit.</text>
</comment>
<comment type="subcellular location">
    <subcellularLocation>
        <location evidence="1">Cytoplasm</location>
    </subcellularLocation>
</comment>
<comment type="similarity">
    <text evidence="1">Belongs to the PPase class C family.</text>
</comment>
<name>PPAC_STAAM</name>
<dbReference type="EC" id="3.6.1.1" evidence="1"/>
<dbReference type="EMBL" id="BA000017">
    <property type="protein sequence ID" value="BAB58081.1"/>
    <property type="molecule type" value="Genomic_DNA"/>
</dbReference>
<dbReference type="RefSeq" id="WP_001140871.1">
    <property type="nucleotide sequence ID" value="NC_002758.2"/>
</dbReference>
<dbReference type="PDB" id="4RPA">
    <property type="method" value="X-ray"/>
    <property type="resolution" value="2.10 A"/>
    <property type="chains" value="A/B=1-309"/>
</dbReference>
<dbReference type="PDBsum" id="4RPA"/>
<dbReference type="SMR" id="P65752"/>
<dbReference type="KEGG" id="sav:SAV1919"/>
<dbReference type="HOGENOM" id="CLU_025243_0_1_9"/>
<dbReference type="PhylomeDB" id="P65752"/>
<dbReference type="BRENDA" id="3.6.1.1">
    <property type="organism ID" value="3352"/>
</dbReference>
<dbReference type="EvolutionaryTrace" id="P65752"/>
<dbReference type="Proteomes" id="UP000002481">
    <property type="component" value="Chromosome"/>
</dbReference>
<dbReference type="GO" id="GO:0005737">
    <property type="term" value="C:cytoplasm"/>
    <property type="evidence" value="ECO:0007669"/>
    <property type="project" value="UniProtKB-SubCell"/>
</dbReference>
<dbReference type="GO" id="GO:0004427">
    <property type="term" value="F:inorganic diphosphate phosphatase activity"/>
    <property type="evidence" value="ECO:0007669"/>
    <property type="project" value="UniProtKB-UniRule"/>
</dbReference>
<dbReference type="GO" id="GO:0030145">
    <property type="term" value="F:manganese ion binding"/>
    <property type="evidence" value="ECO:0007669"/>
    <property type="project" value="UniProtKB-UniRule"/>
</dbReference>
<dbReference type="FunFam" id="3.10.310.20:FF:000001">
    <property type="entry name" value="Probable manganese-dependent inorganic pyrophosphatase"/>
    <property type="match status" value="1"/>
</dbReference>
<dbReference type="FunFam" id="3.90.1640.10:FF:000001">
    <property type="entry name" value="Probable manganese-dependent inorganic pyrophosphatase"/>
    <property type="match status" value="1"/>
</dbReference>
<dbReference type="Gene3D" id="3.10.310.20">
    <property type="entry name" value="DHHA2 domain"/>
    <property type="match status" value="1"/>
</dbReference>
<dbReference type="Gene3D" id="3.90.1640.10">
    <property type="entry name" value="inorganic pyrophosphatase (n-terminal core)"/>
    <property type="match status" value="1"/>
</dbReference>
<dbReference type="HAMAP" id="MF_00207">
    <property type="entry name" value="PPase_C"/>
    <property type="match status" value="1"/>
</dbReference>
<dbReference type="InterPro" id="IPR001667">
    <property type="entry name" value="DDH_dom"/>
</dbReference>
<dbReference type="InterPro" id="IPR038763">
    <property type="entry name" value="DHH_sf"/>
</dbReference>
<dbReference type="InterPro" id="IPR004097">
    <property type="entry name" value="DHHA2"/>
</dbReference>
<dbReference type="InterPro" id="IPR038222">
    <property type="entry name" value="DHHA2_dom_sf"/>
</dbReference>
<dbReference type="InterPro" id="IPR022934">
    <property type="entry name" value="Mn-dep_inorganic_PyrPase"/>
</dbReference>
<dbReference type="NCBIfam" id="NF003877">
    <property type="entry name" value="PRK05427.1"/>
    <property type="match status" value="1"/>
</dbReference>
<dbReference type="PANTHER" id="PTHR12112">
    <property type="entry name" value="BNIP - RELATED"/>
    <property type="match status" value="1"/>
</dbReference>
<dbReference type="PANTHER" id="PTHR12112:SF22">
    <property type="entry name" value="MANGANESE-DEPENDENT INORGANIC PYROPHOSPHATASE-RELATED"/>
    <property type="match status" value="1"/>
</dbReference>
<dbReference type="Pfam" id="PF01368">
    <property type="entry name" value="DHH"/>
    <property type="match status" value="1"/>
</dbReference>
<dbReference type="Pfam" id="PF02833">
    <property type="entry name" value="DHHA2"/>
    <property type="match status" value="1"/>
</dbReference>
<dbReference type="SMART" id="SM01131">
    <property type="entry name" value="DHHA2"/>
    <property type="match status" value="1"/>
</dbReference>
<dbReference type="SUPFAM" id="SSF64182">
    <property type="entry name" value="DHH phosphoesterases"/>
    <property type="match status" value="1"/>
</dbReference>
<accession>P65752</accession>
<accession>Q99SW8</accession>
<proteinExistence type="evidence at protein level"/>
<organism>
    <name type="scientific">Staphylococcus aureus (strain Mu50 / ATCC 700699)</name>
    <dbReference type="NCBI Taxonomy" id="158878"/>
    <lineage>
        <taxon>Bacteria</taxon>
        <taxon>Bacillati</taxon>
        <taxon>Bacillota</taxon>
        <taxon>Bacilli</taxon>
        <taxon>Bacillales</taxon>
        <taxon>Staphylococcaceae</taxon>
        <taxon>Staphylococcus</taxon>
    </lineage>
</organism>